<gene>
    <name type="primary">gap</name>
    <name type="ordered locus">TP_0844</name>
</gene>
<accession>O83816</accession>
<reference key="1">
    <citation type="journal article" date="1998" name="Science">
        <title>Complete genome sequence of Treponema pallidum, the syphilis spirochete.</title>
        <authorList>
            <person name="Fraser C.M."/>
            <person name="Norris S.J."/>
            <person name="Weinstock G.M."/>
            <person name="White O."/>
            <person name="Sutton G.G."/>
            <person name="Dodson R.J."/>
            <person name="Gwinn M.L."/>
            <person name="Hickey E.K."/>
            <person name="Clayton R.A."/>
            <person name="Ketchum K.A."/>
            <person name="Sodergren E."/>
            <person name="Hardham J.M."/>
            <person name="McLeod M.P."/>
            <person name="Salzberg S.L."/>
            <person name="Peterson J.D."/>
            <person name="Khalak H.G."/>
            <person name="Richardson D.L."/>
            <person name="Howell J.K."/>
            <person name="Chidambaram M."/>
            <person name="Utterback T.R."/>
            <person name="McDonald L.A."/>
            <person name="Artiach P."/>
            <person name="Bowman C."/>
            <person name="Cotton M.D."/>
            <person name="Fujii C."/>
            <person name="Garland S.A."/>
            <person name="Hatch B."/>
            <person name="Horst K."/>
            <person name="Roberts K.M."/>
            <person name="Sandusky M."/>
            <person name="Weidman J.F."/>
            <person name="Smith H.O."/>
            <person name="Venter J.C."/>
        </authorList>
    </citation>
    <scope>NUCLEOTIDE SEQUENCE [LARGE SCALE GENOMIC DNA]</scope>
    <source>
        <strain>Nichols</strain>
    </source>
</reference>
<dbReference type="EC" id="1.2.1.12" evidence="2"/>
<dbReference type="EMBL" id="AE000520">
    <property type="protein sequence ID" value="AAC65812.1"/>
    <property type="molecule type" value="Genomic_DNA"/>
</dbReference>
<dbReference type="PIR" id="D71273">
    <property type="entry name" value="D71273"/>
</dbReference>
<dbReference type="RefSeq" id="WP_010882288.1">
    <property type="nucleotide sequence ID" value="NC_021490.2"/>
</dbReference>
<dbReference type="SMR" id="O83816"/>
<dbReference type="IntAct" id="O83816">
    <property type="interactions" value="2"/>
</dbReference>
<dbReference type="STRING" id="243276.TP_0844"/>
<dbReference type="EnsemblBacteria" id="AAC65812">
    <property type="protein sequence ID" value="AAC65812"/>
    <property type="gene ID" value="TP_0844"/>
</dbReference>
<dbReference type="GeneID" id="93876602"/>
<dbReference type="KEGG" id="tpa:TP_0844"/>
<dbReference type="KEGG" id="tpw:TPANIC_0844"/>
<dbReference type="eggNOG" id="COG0057">
    <property type="taxonomic scope" value="Bacteria"/>
</dbReference>
<dbReference type="HOGENOM" id="CLU_030140_0_3_12"/>
<dbReference type="OrthoDB" id="9803304at2"/>
<dbReference type="UniPathway" id="UPA00109">
    <property type="reaction ID" value="UER00184"/>
</dbReference>
<dbReference type="Proteomes" id="UP000000811">
    <property type="component" value="Chromosome"/>
</dbReference>
<dbReference type="GO" id="GO:0005829">
    <property type="term" value="C:cytosol"/>
    <property type="evidence" value="ECO:0007669"/>
    <property type="project" value="TreeGrafter"/>
</dbReference>
<dbReference type="GO" id="GO:0004365">
    <property type="term" value="F:glyceraldehyde-3-phosphate dehydrogenase (NAD+) (phosphorylating) activity"/>
    <property type="evidence" value="ECO:0000250"/>
    <property type="project" value="UniProtKB"/>
</dbReference>
<dbReference type="GO" id="GO:0051287">
    <property type="term" value="F:NAD binding"/>
    <property type="evidence" value="ECO:0000250"/>
    <property type="project" value="UniProtKB"/>
</dbReference>
<dbReference type="GO" id="GO:0050661">
    <property type="term" value="F:NADP binding"/>
    <property type="evidence" value="ECO:0007669"/>
    <property type="project" value="InterPro"/>
</dbReference>
<dbReference type="GO" id="GO:0006006">
    <property type="term" value="P:glucose metabolic process"/>
    <property type="evidence" value="ECO:0007669"/>
    <property type="project" value="InterPro"/>
</dbReference>
<dbReference type="GO" id="GO:0006096">
    <property type="term" value="P:glycolytic process"/>
    <property type="evidence" value="ECO:0007669"/>
    <property type="project" value="UniProtKB-UniPathway"/>
</dbReference>
<dbReference type="CDD" id="cd18126">
    <property type="entry name" value="GAPDH_I_C"/>
    <property type="match status" value="1"/>
</dbReference>
<dbReference type="CDD" id="cd05214">
    <property type="entry name" value="GAPDH_I_N"/>
    <property type="match status" value="1"/>
</dbReference>
<dbReference type="FunFam" id="3.30.360.10:FF:000001">
    <property type="entry name" value="Glyceraldehyde-3-phosphate dehydrogenase"/>
    <property type="match status" value="1"/>
</dbReference>
<dbReference type="FunFam" id="3.40.50.720:FF:000001">
    <property type="entry name" value="Glyceraldehyde-3-phosphate dehydrogenase"/>
    <property type="match status" value="1"/>
</dbReference>
<dbReference type="Gene3D" id="3.30.360.10">
    <property type="entry name" value="Dihydrodipicolinate Reductase, domain 2"/>
    <property type="match status" value="1"/>
</dbReference>
<dbReference type="Gene3D" id="3.40.50.720">
    <property type="entry name" value="NAD(P)-binding Rossmann-like Domain"/>
    <property type="match status" value="1"/>
</dbReference>
<dbReference type="InterPro" id="IPR020831">
    <property type="entry name" value="GlycerAld/Erythrose_P_DH"/>
</dbReference>
<dbReference type="InterPro" id="IPR020830">
    <property type="entry name" value="GlycerAld_3-P_DH_AS"/>
</dbReference>
<dbReference type="InterPro" id="IPR020829">
    <property type="entry name" value="GlycerAld_3-P_DH_cat"/>
</dbReference>
<dbReference type="InterPro" id="IPR020828">
    <property type="entry name" value="GlycerAld_3-P_DH_NAD(P)-bd"/>
</dbReference>
<dbReference type="InterPro" id="IPR006424">
    <property type="entry name" value="Glyceraldehyde-3-P_DH_1"/>
</dbReference>
<dbReference type="InterPro" id="IPR036291">
    <property type="entry name" value="NAD(P)-bd_dom_sf"/>
</dbReference>
<dbReference type="NCBIfam" id="TIGR01534">
    <property type="entry name" value="GAPDH-I"/>
    <property type="match status" value="1"/>
</dbReference>
<dbReference type="PANTHER" id="PTHR10836">
    <property type="entry name" value="GLYCERALDEHYDE 3-PHOSPHATE DEHYDROGENASE"/>
    <property type="match status" value="1"/>
</dbReference>
<dbReference type="PANTHER" id="PTHR10836:SF76">
    <property type="entry name" value="GLYCERALDEHYDE-3-PHOSPHATE DEHYDROGENASE-RELATED"/>
    <property type="match status" value="1"/>
</dbReference>
<dbReference type="Pfam" id="PF02800">
    <property type="entry name" value="Gp_dh_C"/>
    <property type="match status" value="1"/>
</dbReference>
<dbReference type="Pfam" id="PF00044">
    <property type="entry name" value="Gp_dh_N"/>
    <property type="match status" value="1"/>
</dbReference>
<dbReference type="PIRSF" id="PIRSF000149">
    <property type="entry name" value="GAP_DH"/>
    <property type="match status" value="1"/>
</dbReference>
<dbReference type="PRINTS" id="PR00078">
    <property type="entry name" value="G3PDHDRGNASE"/>
</dbReference>
<dbReference type="SMART" id="SM00846">
    <property type="entry name" value="Gp_dh_N"/>
    <property type="match status" value="1"/>
</dbReference>
<dbReference type="SUPFAM" id="SSF55347">
    <property type="entry name" value="Glyceraldehyde-3-phosphate dehydrogenase-like, C-terminal domain"/>
    <property type="match status" value="1"/>
</dbReference>
<dbReference type="SUPFAM" id="SSF51735">
    <property type="entry name" value="NAD(P)-binding Rossmann-fold domains"/>
    <property type="match status" value="1"/>
</dbReference>
<dbReference type="PROSITE" id="PS00071">
    <property type="entry name" value="GAPDH"/>
    <property type="match status" value="1"/>
</dbReference>
<proteinExistence type="inferred from homology"/>
<name>G3P_TREPA</name>
<protein>
    <recommendedName>
        <fullName evidence="1">Glyceraldehyde-3-phosphate dehydrogenase</fullName>
        <shortName evidence="1">GAPDH</shortName>
        <ecNumber evidence="2">1.2.1.12</ecNumber>
    </recommendedName>
    <alternativeName>
        <fullName evidence="1">NAD-dependent glyceraldehyde-3-phosphate dehydrogenase</fullName>
    </alternativeName>
</protein>
<comment type="function">
    <text evidence="1">Catalyzes the oxidative phosphorylation of glyceraldehyde 3-phosphate (G3P) to 1,3-bisphosphoglycerate (BPG) using the cofactor NAD. The first reaction step involves the formation of a hemiacetal intermediate between G3P and a cysteine residue, and this hemiacetal intermediate is then oxidized to a thioester, with concomitant reduction of NAD to NADH. The reduced NADH is then exchanged with the second NAD, and the thioester is attacked by a nucleophilic inorganic phosphate to produce BPG.</text>
</comment>
<comment type="catalytic activity">
    <reaction evidence="2">
        <text>D-glyceraldehyde 3-phosphate + phosphate + NAD(+) = (2R)-3-phospho-glyceroyl phosphate + NADH + H(+)</text>
        <dbReference type="Rhea" id="RHEA:10300"/>
        <dbReference type="ChEBI" id="CHEBI:15378"/>
        <dbReference type="ChEBI" id="CHEBI:43474"/>
        <dbReference type="ChEBI" id="CHEBI:57540"/>
        <dbReference type="ChEBI" id="CHEBI:57604"/>
        <dbReference type="ChEBI" id="CHEBI:57945"/>
        <dbReference type="ChEBI" id="CHEBI:59776"/>
        <dbReference type="EC" id="1.2.1.12"/>
    </reaction>
</comment>
<comment type="pathway">
    <text evidence="4">Carbohydrate degradation; glycolysis; pyruvate from D-glyceraldehyde 3-phosphate: step 1/5.</text>
</comment>
<comment type="subunit">
    <text evidence="1">Homotetramer.</text>
</comment>
<comment type="subcellular location">
    <subcellularLocation>
        <location evidence="4">Cytoplasm</location>
    </subcellularLocation>
</comment>
<comment type="similarity">
    <text evidence="4">Belongs to the glyceraldehyde-3-phosphate dehydrogenase family.</text>
</comment>
<keyword id="KW-0963">Cytoplasm</keyword>
<keyword id="KW-0324">Glycolysis</keyword>
<keyword id="KW-0520">NAD</keyword>
<keyword id="KW-0547">Nucleotide-binding</keyword>
<keyword id="KW-0560">Oxidoreductase</keyword>
<keyword id="KW-1185">Reference proteome</keyword>
<feature type="chain" id="PRO_0000145712" description="Glyceraldehyde-3-phosphate dehydrogenase">
    <location>
        <begin position="1"/>
        <end position="350"/>
    </location>
</feature>
<feature type="active site" description="Nucleophile" evidence="1">
    <location>
        <position position="162"/>
    </location>
</feature>
<feature type="binding site" evidence="1">
    <location>
        <begin position="10"/>
        <end position="11"/>
    </location>
    <ligand>
        <name>NAD(+)</name>
        <dbReference type="ChEBI" id="CHEBI:57540"/>
    </ligand>
</feature>
<feature type="binding site" evidence="1">
    <location>
        <position position="36"/>
    </location>
    <ligand>
        <name>NAD(+)</name>
        <dbReference type="ChEBI" id="CHEBI:57540"/>
    </ligand>
</feature>
<feature type="binding site" evidence="1">
    <location>
        <position position="82"/>
    </location>
    <ligand>
        <name>NAD(+)</name>
        <dbReference type="ChEBI" id="CHEBI:57540"/>
    </ligand>
</feature>
<feature type="binding site" evidence="1">
    <location>
        <position position="125"/>
    </location>
    <ligand>
        <name>NAD(+)</name>
        <dbReference type="ChEBI" id="CHEBI:57540"/>
    </ligand>
</feature>
<feature type="binding site" evidence="1">
    <location>
        <begin position="161"/>
        <end position="163"/>
    </location>
    <ligand>
        <name>D-glyceraldehyde 3-phosphate</name>
        <dbReference type="ChEBI" id="CHEBI:59776"/>
    </ligand>
</feature>
<feature type="binding site" evidence="1">
    <location>
        <position position="193"/>
    </location>
    <ligand>
        <name>D-glyceraldehyde 3-phosphate</name>
        <dbReference type="ChEBI" id="CHEBI:59776"/>
    </ligand>
</feature>
<feature type="binding site" evidence="1">
    <location>
        <begin position="222"/>
        <end position="223"/>
    </location>
    <ligand>
        <name>D-glyceraldehyde 3-phosphate</name>
        <dbReference type="ChEBI" id="CHEBI:59776"/>
    </ligand>
</feature>
<feature type="binding site" evidence="1">
    <location>
        <position position="245"/>
    </location>
    <ligand>
        <name>D-glyceraldehyde 3-phosphate</name>
        <dbReference type="ChEBI" id="CHEBI:59776"/>
    </ligand>
</feature>
<feature type="binding site" evidence="1">
    <location>
        <position position="331"/>
    </location>
    <ligand>
        <name>NAD(+)</name>
        <dbReference type="ChEBI" id="CHEBI:57540"/>
    </ligand>
</feature>
<feature type="site" description="Activates thiol group during catalysis" evidence="3">
    <location>
        <position position="190"/>
    </location>
</feature>
<organism>
    <name type="scientific">Treponema pallidum (strain Nichols)</name>
    <dbReference type="NCBI Taxonomy" id="243276"/>
    <lineage>
        <taxon>Bacteria</taxon>
        <taxon>Pseudomonadati</taxon>
        <taxon>Spirochaetota</taxon>
        <taxon>Spirochaetia</taxon>
        <taxon>Spirochaetales</taxon>
        <taxon>Treponemataceae</taxon>
        <taxon>Treponema</taxon>
    </lineage>
</organism>
<sequence length="350" mass="38083">MRVAINGFGRIGRLVLQAMAEQKLLGKEFDVAAVVDLSTDARYFAYQLKYDSVQGKMGSSLSAPAEDILEVGGHRIKCVCGRGLKPSQLPWKDLGIEVVIEATGIYANESSYGHLEAGAKRVIISAPAKSSDASKPVKTIVMGVNEHEFDPAEHKVVSNASCTTNCLAPVVHVFLKEGVGIETGLMTTIHSYTATQKTVDGVSLKDWRGGRAAAVNIIPSTTGAAKAVGEVLPSTRGKLTGMAFRVPTPTGSVVDLTFRTEKETSVADLNAMLKKASESYLRGVLQYCDEDIVSADVIHNQYSSIYDSRATLQNNLPNEKRFFKVVSWYDNEWGYSNRVVDLLKFISQKR</sequence>
<evidence type="ECO:0000250" key="1">
    <source>
        <dbReference type="UniProtKB" id="P00362"/>
    </source>
</evidence>
<evidence type="ECO:0000250" key="2">
    <source>
        <dbReference type="UniProtKB" id="P09124"/>
    </source>
</evidence>
<evidence type="ECO:0000250" key="3">
    <source>
        <dbReference type="UniProtKB" id="P0A9B2"/>
    </source>
</evidence>
<evidence type="ECO:0000305" key="4"/>